<sequence>MKHLPQLEGVSVGLEGEAVSLFWGEIKEEERQEIYECAKALVPWRKGPFWVGDFLIDSEWVSAKKYALLEPHFDLCNKDVADIGCNNGYYMFRMWGQKPKSLTGFDPSPLCRTQFDFINHFIQAPIRFELLGVEHLEGYGKLFDVIFCLGVLYHRSDPIQTLKSLYKGLAKGGELLLDTLMIEGEEEVALTPKDRYAKMSNVYFIPTFKALSHWLHRAGFERVEKLEIAKTGLDEQRKTEWINSQSLEDFLDPCSHDRTIEGYPAPRRIYVKAYKGA</sequence>
<gene>
    <name evidence="1" type="primary">cmoB</name>
    <name type="ordered locus">WS0668</name>
</gene>
<reference key="1">
    <citation type="journal article" date="2003" name="Proc. Natl. Acad. Sci. U.S.A.">
        <title>Complete genome sequence and analysis of Wolinella succinogenes.</title>
        <authorList>
            <person name="Baar C."/>
            <person name="Eppinger M."/>
            <person name="Raddatz G."/>
            <person name="Simon J."/>
            <person name="Lanz C."/>
            <person name="Klimmek O."/>
            <person name="Nandakumar R."/>
            <person name="Gross R."/>
            <person name="Rosinus A."/>
            <person name="Keller H."/>
            <person name="Jagtap P."/>
            <person name="Linke B."/>
            <person name="Meyer F."/>
            <person name="Lederer H."/>
            <person name="Schuster S.C."/>
        </authorList>
    </citation>
    <scope>NUCLEOTIDE SEQUENCE [LARGE SCALE GENOMIC DNA]</scope>
    <source>
        <strain>ATCC 29543 / DSM 1740 / CCUG 13145 / JCM 31913 / LMG 7466 / NCTC 11488 / FDC 602W</strain>
    </source>
</reference>
<dbReference type="EC" id="2.5.1.-" evidence="1"/>
<dbReference type="EMBL" id="BX571658">
    <property type="protein sequence ID" value="CAE09796.1"/>
    <property type="molecule type" value="Genomic_DNA"/>
</dbReference>
<dbReference type="SMR" id="Q7MS89"/>
<dbReference type="STRING" id="273121.WS0668"/>
<dbReference type="DNASU" id="2555099"/>
<dbReference type="KEGG" id="wsu:WS0668"/>
<dbReference type="eggNOG" id="COG0500">
    <property type="taxonomic scope" value="Bacteria"/>
</dbReference>
<dbReference type="HOGENOM" id="CLU_052665_1_0_7"/>
<dbReference type="Proteomes" id="UP000000422">
    <property type="component" value="Chromosome"/>
</dbReference>
<dbReference type="GO" id="GO:0016765">
    <property type="term" value="F:transferase activity, transferring alkyl or aryl (other than methyl) groups"/>
    <property type="evidence" value="ECO:0007669"/>
    <property type="project" value="InterPro"/>
</dbReference>
<dbReference type="GO" id="GO:0002098">
    <property type="term" value="P:tRNA wobble uridine modification"/>
    <property type="evidence" value="ECO:0007669"/>
    <property type="project" value="InterPro"/>
</dbReference>
<dbReference type="CDD" id="cd02440">
    <property type="entry name" value="AdoMet_MTases"/>
    <property type="match status" value="1"/>
</dbReference>
<dbReference type="Gene3D" id="3.40.50.150">
    <property type="entry name" value="Vaccinia Virus protein VP39"/>
    <property type="match status" value="1"/>
</dbReference>
<dbReference type="HAMAP" id="MF_01590">
    <property type="entry name" value="tRNA_carboxymethyltr_CmoB"/>
    <property type="match status" value="1"/>
</dbReference>
<dbReference type="InterPro" id="IPR010017">
    <property type="entry name" value="CmoB"/>
</dbReference>
<dbReference type="InterPro" id="IPR027555">
    <property type="entry name" value="Mo5U34_MeTrfas-like"/>
</dbReference>
<dbReference type="InterPro" id="IPR029063">
    <property type="entry name" value="SAM-dependent_MTases_sf"/>
</dbReference>
<dbReference type="NCBIfam" id="NF011650">
    <property type="entry name" value="PRK15068.1"/>
    <property type="match status" value="1"/>
</dbReference>
<dbReference type="NCBIfam" id="TIGR00452">
    <property type="entry name" value="tRNA 5-methoxyuridine(34)/uridine 5-oxyacetic acid(34) synthase CmoB"/>
    <property type="match status" value="1"/>
</dbReference>
<dbReference type="PANTHER" id="PTHR43861">
    <property type="entry name" value="TRANS-ACONITATE 2-METHYLTRANSFERASE-RELATED"/>
    <property type="match status" value="1"/>
</dbReference>
<dbReference type="Pfam" id="PF08003">
    <property type="entry name" value="Methyltransf_9"/>
    <property type="match status" value="1"/>
</dbReference>
<dbReference type="SUPFAM" id="SSF53335">
    <property type="entry name" value="S-adenosyl-L-methionine-dependent methyltransferases"/>
    <property type="match status" value="1"/>
</dbReference>
<accession>Q7MS89</accession>
<comment type="function">
    <text evidence="1">Catalyzes carboxymethyl transfer from carboxy-S-adenosyl-L-methionine (Cx-SAM) to 5-hydroxyuridine (ho5U) to form 5-carboxymethoxyuridine (cmo5U) at position 34 in tRNAs.</text>
</comment>
<comment type="catalytic activity">
    <reaction evidence="1">
        <text>carboxy-S-adenosyl-L-methionine + 5-hydroxyuridine(34) in tRNA = 5-carboxymethoxyuridine(34) in tRNA + S-adenosyl-L-homocysteine + H(+)</text>
        <dbReference type="Rhea" id="RHEA:52848"/>
        <dbReference type="Rhea" id="RHEA-COMP:13381"/>
        <dbReference type="Rhea" id="RHEA-COMP:13383"/>
        <dbReference type="ChEBI" id="CHEBI:15378"/>
        <dbReference type="ChEBI" id="CHEBI:57856"/>
        <dbReference type="ChEBI" id="CHEBI:134278"/>
        <dbReference type="ChEBI" id="CHEBI:136877"/>
        <dbReference type="ChEBI" id="CHEBI:136879"/>
    </reaction>
</comment>
<comment type="subunit">
    <text evidence="1">Homotetramer.</text>
</comment>
<comment type="similarity">
    <text evidence="1">Belongs to the class I-like SAM-binding methyltransferase superfamily. CmoB family.</text>
</comment>
<evidence type="ECO:0000255" key="1">
    <source>
        <dbReference type="HAMAP-Rule" id="MF_01590"/>
    </source>
</evidence>
<organism>
    <name type="scientific">Wolinella succinogenes (strain ATCC 29543 / DSM 1740 / CCUG 13145 / JCM 31913 / LMG 7466 / NCTC 11488 / FDC 602W)</name>
    <name type="common">Vibrio succinogenes</name>
    <dbReference type="NCBI Taxonomy" id="273121"/>
    <lineage>
        <taxon>Bacteria</taxon>
        <taxon>Pseudomonadati</taxon>
        <taxon>Campylobacterota</taxon>
        <taxon>Epsilonproteobacteria</taxon>
        <taxon>Campylobacterales</taxon>
        <taxon>Helicobacteraceae</taxon>
        <taxon>Wolinella</taxon>
    </lineage>
</organism>
<proteinExistence type="inferred from homology"/>
<protein>
    <recommendedName>
        <fullName evidence="1">tRNA U34 carboxymethyltransferase</fullName>
        <ecNumber evidence="1">2.5.1.-</ecNumber>
    </recommendedName>
</protein>
<name>CMOB_WOLSU</name>
<keyword id="KW-1185">Reference proteome</keyword>
<keyword id="KW-0808">Transferase</keyword>
<keyword id="KW-0819">tRNA processing</keyword>
<feature type="chain" id="PRO_0000313991" description="tRNA U34 carboxymethyltransferase">
    <location>
        <begin position="1"/>
        <end position="277"/>
    </location>
</feature>
<feature type="binding site" evidence="1">
    <location>
        <position position="46"/>
    </location>
    <ligand>
        <name>carboxy-S-adenosyl-L-methionine</name>
        <dbReference type="ChEBI" id="CHEBI:134278"/>
    </ligand>
</feature>
<feature type="binding site" evidence="1">
    <location>
        <position position="60"/>
    </location>
    <ligand>
        <name>carboxy-S-adenosyl-L-methionine</name>
        <dbReference type="ChEBI" id="CHEBI:134278"/>
    </ligand>
</feature>
<feature type="binding site" evidence="1">
    <location>
        <position position="65"/>
    </location>
    <ligand>
        <name>carboxy-S-adenosyl-L-methionine</name>
        <dbReference type="ChEBI" id="CHEBI:134278"/>
    </ligand>
</feature>
<feature type="binding site" evidence="1">
    <location>
        <position position="84"/>
    </location>
    <ligand>
        <name>carboxy-S-adenosyl-L-methionine</name>
        <dbReference type="ChEBI" id="CHEBI:134278"/>
    </ligand>
</feature>
<feature type="binding site" evidence="1">
    <location>
        <begin position="106"/>
        <end position="108"/>
    </location>
    <ligand>
        <name>carboxy-S-adenosyl-L-methionine</name>
        <dbReference type="ChEBI" id="CHEBI:134278"/>
    </ligand>
</feature>
<feature type="binding site" evidence="1">
    <location>
        <begin position="133"/>
        <end position="134"/>
    </location>
    <ligand>
        <name>carboxy-S-adenosyl-L-methionine</name>
        <dbReference type="ChEBI" id="CHEBI:134278"/>
    </ligand>
</feature>
<feature type="binding site" evidence="1">
    <location>
        <position position="153"/>
    </location>
    <ligand>
        <name>carboxy-S-adenosyl-L-methionine</name>
        <dbReference type="ChEBI" id="CHEBI:134278"/>
    </ligand>
</feature>
<feature type="binding site" evidence="1">
    <location>
        <position position="268"/>
    </location>
    <ligand>
        <name>carboxy-S-adenosyl-L-methionine</name>
        <dbReference type="ChEBI" id="CHEBI:134278"/>
    </ligand>
</feature>